<keyword id="KW-1185">Reference proteome</keyword>
<keyword id="KW-0687">Ribonucleoprotein</keyword>
<keyword id="KW-0689">Ribosomal protein</keyword>
<keyword id="KW-0694">RNA-binding</keyword>
<keyword id="KW-0699">rRNA-binding</keyword>
<keyword id="KW-0820">tRNA-binding</keyword>
<feature type="chain" id="PRO_1000086593" description="Large ribosomal subunit protein uL5">
    <location>
        <begin position="1"/>
        <end position="179"/>
    </location>
</feature>
<reference key="1">
    <citation type="submission" date="2007-05" db="EMBL/GenBank/DDBJ databases">
        <title>Complete sequence of Geobacter uraniireducens Rf4.</title>
        <authorList>
            <consortium name="US DOE Joint Genome Institute"/>
            <person name="Copeland A."/>
            <person name="Lucas S."/>
            <person name="Lapidus A."/>
            <person name="Barry K."/>
            <person name="Detter J.C."/>
            <person name="Glavina del Rio T."/>
            <person name="Hammon N."/>
            <person name="Israni S."/>
            <person name="Dalin E."/>
            <person name="Tice H."/>
            <person name="Pitluck S."/>
            <person name="Chertkov O."/>
            <person name="Brettin T."/>
            <person name="Bruce D."/>
            <person name="Han C."/>
            <person name="Schmutz J."/>
            <person name="Larimer F."/>
            <person name="Land M."/>
            <person name="Hauser L."/>
            <person name="Kyrpides N."/>
            <person name="Mikhailova N."/>
            <person name="Shelobolina E."/>
            <person name="Aklujkar M."/>
            <person name="Lovley D."/>
            <person name="Richardson P."/>
        </authorList>
    </citation>
    <scope>NUCLEOTIDE SEQUENCE [LARGE SCALE GENOMIC DNA]</scope>
    <source>
        <strain>ATCC BAA-1134 / JCM 13001 / Rf4</strain>
    </source>
</reference>
<organism>
    <name type="scientific">Geotalea uraniireducens (strain Rf4)</name>
    <name type="common">Geobacter uraniireducens</name>
    <dbReference type="NCBI Taxonomy" id="351605"/>
    <lineage>
        <taxon>Bacteria</taxon>
        <taxon>Pseudomonadati</taxon>
        <taxon>Thermodesulfobacteriota</taxon>
        <taxon>Desulfuromonadia</taxon>
        <taxon>Geobacterales</taxon>
        <taxon>Geobacteraceae</taxon>
        <taxon>Geotalea</taxon>
    </lineage>
</organism>
<protein>
    <recommendedName>
        <fullName evidence="1">Large ribosomal subunit protein uL5</fullName>
    </recommendedName>
    <alternativeName>
        <fullName evidence="2">50S ribosomal protein L5</fullName>
    </alternativeName>
</protein>
<sequence length="179" mass="20145">MARLNELYNKEMVPQLMKDFNYRNVMEVPKLEKIVVNMGLGEAIQNVKILDSAVDEMAVITGQKPIITKAKKSIAGFKLRQGMPIGCAVTLRKDKMYEFLDRLVNVSLPRVRDFKGISGKAFDGNGNYSLGVKEQLIFPEINYDKIDKIKGLNITIVTTAKSDEEGKALLKLFGMPFRN</sequence>
<evidence type="ECO:0000255" key="1">
    <source>
        <dbReference type="HAMAP-Rule" id="MF_01333"/>
    </source>
</evidence>
<evidence type="ECO:0000305" key="2"/>
<proteinExistence type="inferred from homology"/>
<gene>
    <name evidence="1" type="primary">rplE</name>
    <name type="ordered locus">Gura_1078</name>
</gene>
<accession>A5GAV4</accession>
<comment type="function">
    <text evidence="1">This is one of the proteins that bind and probably mediate the attachment of the 5S RNA into the large ribosomal subunit, where it forms part of the central protuberance. In the 70S ribosome it contacts protein S13 of the 30S subunit (bridge B1b), connecting the 2 subunits; this bridge is implicated in subunit movement. Contacts the P site tRNA; the 5S rRNA and some of its associated proteins might help stabilize positioning of ribosome-bound tRNAs.</text>
</comment>
<comment type="subunit">
    <text evidence="1">Part of the 50S ribosomal subunit; part of the 5S rRNA/L5/L18/L25 subcomplex. Contacts the 5S rRNA and the P site tRNA. Forms a bridge to the 30S subunit in the 70S ribosome.</text>
</comment>
<comment type="similarity">
    <text evidence="1">Belongs to the universal ribosomal protein uL5 family.</text>
</comment>
<name>RL5_GEOUR</name>
<dbReference type="EMBL" id="CP000698">
    <property type="protein sequence ID" value="ABQ25284.1"/>
    <property type="molecule type" value="Genomic_DNA"/>
</dbReference>
<dbReference type="RefSeq" id="WP_011938007.1">
    <property type="nucleotide sequence ID" value="NC_009483.1"/>
</dbReference>
<dbReference type="SMR" id="A5GAV4"/>
<dbReference type="STRING" id="351605.Gura_1078"/>
<dbReference type="KEGG" id="gur:Gura_1078"/>
<dbReference type="HOGENOM" id="CLU_061015_2_1_7"/>
<dbReference type="OrthoDB" id="9806626at2"/>
<dbReference type="Proteomes" id="UP000006695">
    <property type="component" value="Chromosome"/>
</dbReference>
<dbReference type="GO" id="GO:1990904">
    <property type="term" value="C:ribonucleoprotein complex"/>
    <property type="evidence" value="ECO:0007669"/>
    <property type="project" value="UniProtKB-KW"/>
</dbReference>
<dbReference type="GO" id="GO:0005840">
    <property type="term" value="C:ribosome"/>
    <property type="evidence" value="ECO:0007669"/>
    <property type="project" value="UniProtKB-KW"/>
</dbReference>
<dbReference type="GO" id="GO:0019843">
    <property type="term" value="F:rRNA binding"/>
    <property type="evidence" value="ECO:0007669"/>
    <property type="project" value="UniProtKB-UniRule"/>
</dbReference>
<dbReference type="GO" id="GO:0003735">
    <property type="term" value="F:structural constituent of ribosome"/>
    <property type="evidence" value="ECO:0007669"/>
    <property type="project" value="InterPro"/>
</dbReference>
<dbReference type="GO" id="GO:0000049">
    <property type="term" value="F:tRNA binding"/>
    <property type="evidence" value="ECO:0007669"/>
    <property type="project" value="UniProtKB-UniRule"/>
</dbReference>
<dbReference type="GO" id="GO:0006412">
    <property type="term" value="P:translation"/>
    <property type="evidence" value="ECO:0007669"/>
    <property type="project" value="UniProtKB-UniRule"/>
</dbReference>
<dbReference type="FunFam" id="3.30.1440.10:FF:000001">
    <property type="entry name" value="50S ribosomal protein L5"/>
    <property type="match status" value="1"/>
</dbReference>
<dbReference type="Gene3D" id="3.30.1440.10">
    <property type="match status" value="1"/>
</dbReference>
<dbReference type="HAMAP" id="MF_01333_B">
    <property type="entry name" value="Ribosomal_uL5_B"/>
    <property type="match status" value="1"/>
</dbReference>
<dbReference type="InterPro" id="IPR002132">
    <property type="entry name" value="Ribosomal_uL5"/>
</dbReference>
<dbReference type="InterPro" id="IPR020930">
    <property type="entry name" value="Ribosomal_uL5_bac-type"/>
</dbReference>
<dbReference type="InterPro" id="IPR031309">
    <property type="entry name" value="Ribosomal_uL5_C"/>
</dbReference>
<dbReference type="InterPro" id="IPR020929">
    <property type="entry name" value="Ribosomal_uL5_CS"/>
</dbReference>
<dbReference type="InterPro" id="IPR022803">
    <property type="entry name" value="Ribosomal_uL5_dom_sf"/>
</dbReference>
<dbReference type="InterPro" id="IPR031310">
    <property type="entry name" value="Ribosomal_uL5_N"/>
</dbReference>
<dbReference type="NCBIfam" id="NF000585">
    <property type="entry name" value="PRK00010.1"/>
    <property type="match status" value="1"/>
</dbReference>
<dbReference type="PANTHER" id="PTHR11994">
    <property type="entry name" value="60S RIBOSOMAL PROTEIN L11-RELATED"/>
    <property type="match status" value="1"/>
</dbReference>
<dbReference type="Pfam" id="PF00281">
    <property type="entry name" value="Ribosomal_L5"/>
    <property type="match status" value="1"/>
</dbReference>
<dbReference type="Pfam" id="PF00673">
    <property type="entry name" value="Ribosomal_L5_C"/>
    <property type="match status" value="1"/>
</dbReference>
<dbReference type="PIRSF" id="PIRSF002161">
    <property type="entry name" value="Ribosomal_L5"/>
    <property type="match status" value="1"/>
</dbReference>
<dbReference type="SUPFAM" id="SSF55282">
    <property type="entry name" value="RL5-like"/>
    <property type="match status" value="1"/>
</dbReference>
<dbReference type="PROSITE" id="PS00358">
    <property type="entry name" value="RIBOSOMAL_L5"/>
    <property type="match status" value="1"/>
</dbReference>